<name>TENR_HUMAN</name>
<reference key="1">
    <citation type="journal article" date="1996" name="J. Biol. Chem.">
        <title>Human tenascin-R: complete primary structure, pre-mRNA alternative splicing and gene localization on chromosome 1q23-q24.</title>
        <authorList>
            <person name="Carnemolla B."/>
            <person name="Leprini A."/>
            <person name="Borsi L."/>
            <person name="Querze G."/>
            <person name="Urbini S."/>
            <person name="Zardi L."/>
        </authorList>
    </citation>
    <scope>NUCLEOTIDE SEQUENCE [MRNA] (ISOFORMS 1 AND 2)</scope>
    <scope>TISSUE SPECIFICITY</scope>
    <scope>VARIANT VAL-17</scope>
    <source>
        <tissue>Brain</tissue>
    </source>
</reference>
<reference key="2">
    <citation type="submission" date="1996-05" db="EMBL/GenBank/DDBJ databases">
        <title>Isolation of the gene for neural cell adhesion molecule tenascin-R and fine mapping relative to loci in 1q25-31.</title>
        <authorList>
            <person name="Williams H."/>
            <person name="Schachner M."/>
            <person name="Wang B."/>
            <person name="Goodfellow P."/>
            <person name="Kenwrick S."/>
        </authorList>
    </citation>
    <scope>NUCLEOTIDE SEQUENCE [MRNA] (ISOFORM 1)</scope>
    <scope>VARIANT VAL-17</scope>
    <source>
        <tissue>Brain</tissue>
    </source>
</reference>
<reference key="3">
    <citation type="journal article" date="2006" name="Nature">
        <title>The DNA sequence and biological annotation of human chromosome 1.</title>
        <authorList>
            <person name="Gregory S.G."/>
            <person name="Barlow K.F."/>
            <person name="McLay K.E."/>
            <person name="Kaul R."/>
            <person name="Swarbreck D."/>
            <person name="Dunham A."/>
            <person name="Scott C.E."/>
            <person name="Howe K.L."/>
            <person name="Woodfine K."/>
            <person name="Spencer C.C.A."/>
            <person name="Jones M.C."/>
            <person name="Gillson C."/>
            <person name="Searle S."/>
            <person name="Zhou Y."/>
            <person name="Kokocinski F."/>
            <person name="McDonald L."/>
            <person name="Evans R."/>
            <person name="Phillips K."/>
            <person name="Atkinson A."/>
            <person name="Cooper R."/>
            <person name="Jones C."/>
            <person name="Hall R.E."/>
            <person name="Andrews T.D."/>
            <person name="Lloyd C."/>
            <person name="Ainscough R."/>
            <person name="Almeida J.P."/>
            <person name="Ambrose K.D."/>
            <person name="Anderson F."/>
            <person name="Andrew R.W."/>
            <person name="Ashwell R.I.S."/>
            <person name="Aubin K."/>
            <person name="Babbage A.K."/>
            <person name="Bagguley C.L."/>
            <person name="Bailey J."/>
            <person name="Beasley H."/>
            <person name="Bethel G."/>
            <person name="Bird C.P."/>
            <person name="Bray-Allen S."/>
            <person name="Brown J.Y."/>
            <person name="Brown A.J."/>
            <person name="Buckley D."/>
            <person name="Burton J."/>
            <person name="Bye J."/>
            <person name="Carder C."/>
            <person name="Chapman J.C."/>
            <person name="Clark S.Y."/>
            <person name="Clarke G."/>
            <person name="Clee C."/>
            <person name="Cobley V."/>
            <person name="Collier R.E."/>
            <person name="Corby N."/>
            <person name="Coville G.J."/>
            <person name="Davies J."/>
            <person name="Deadman R."/>
            <person name="Dunn M."/>
            <person name="Earthrowl M."/>
            <person name="Ellington A.G."/>
            <person name="Errington H."/>
            <person name="Frankish A."/>
            <person name="Frankland J."/>
            <person name="French L."/>
            <person name="Garner P."/>
            <person name="Garnett J."/>
            <person name="Gay L."/>
            <person name="Ghori M.R.J."/>
            <person name="Gibson R."/>
            <person name="Gilby L.M."/>
            <person name="Gillett W."/>
            <person name="Glithero R.J."/>
            <person name="Grafham D.V."/>
            <person name="Griffiths C."/>
            <person name="Griffiths-Jones S."/>
            <person name="Grocock R."/>
            <person name="Hammond S."/>
            <person name="Harrison E.S.I."/>
            <person name="Hart E."/>
            <person name="Haugen E."/>
            <person name="Heath P.D."/>
            <person name="Holmes S."/>
            <person name="Holt K."/>
            <person name="Howden P.J."/>
            <person name="Hunt A.R."/>
            <person name="Hunt S.E."/>
            <person name="Hunter G."/>
            <person name="Isherwood J."/>
            <person name="James R."/>
            <person name="Johnson C."/>
            <person name="Johnson D."/>
            <person name="Joy A."/>
            <person name="Kay M."/>
            <person name="Kershaw J.K."/>
            <person name="Kibukawa M."/>
            <person name="Kimberley A.M."/>
            <person name="King A."/>
            <person name="Knights A.J."/>
            <person name="Lad H."/>
            <person name="Laird G."/>
            <person name="Lawlor S."/>
            <person name="Leongamornlert D.A."/>
            <person name="Lloyd D.M."/>
            <person name="Loveland J."/>
            <person name="Lovell J."/>
            <person name="Lush M.J."/>
            <person name="Lyne R."/>
            <person name="Martin S."/>
            <person name="Mashreghi-Mohammadi M."/>
            <person name="Matthews L."/>
            <person name="Matthews N.S.W."/>
            <person name="McLaren S."/>
            <person name="Milne S."/>
            <person name="Mistry S."/>
            <person name="Moore M.J.F."/>
            <person name="Nickerson T."/>
            <person name="O'Dell C.N."/>
            <person name="Oliver K."/>
            <person name="Palmeiri A."/>
            <person name="Palmer S.A."/>
            <person name="Parker A."/>
            <person name="Patel D."/>
            <person name="Pearce A.V."/>
            <person name="Peck A.I."/>
            <person name="Pelan S."/>
            <person name="Phelps K."/>
            <person name="Phillimore B.J."/>
            <person name="Plumb R."/>
            <person name="Rajan J."/>
            <person name="Raymond C."/>
            <person name="Rouse G."/>
            <person name="Saenphimmachak C."/>
            <person name="Sehra H.K."/>
            <person name="Sheridan E."/>
            <person name="Shownkeen R."/>
            <person name="Sims S."/>
            <person name="Skuce C.D."/>
            <person name="Smith M."/>
            <person name="Steward C."/>
            <person name="Subramanian S."/>
            <person name="Sycamore N."/>
            <person name="Tracey A."/>
            <person name="Tromans A."/>
            <person name="Van Helmond Z."/>
            <person name="Wall M."/>
            <person name="Wallis J.M."/>
            <person name="White S."/>
            <person name="Whitehead S.L."/>
            <person name="Wilkinson J.E."/>
            <person name="Willey D.L."/>
            <person name="Williams H."/>
            <person name="Wilming L."/>
            <person name="Wray P.W."/>
            <person name="Wu Z."/>
            <person name="Coulson A."/>
            <person name="Vaudin M."/>
            <person name="Sulston J.E."/>
            <person name="Durbin R.M."/>
            <person name="Hubbard T."/>
            <person name="Wooster R."/>
            <person name="Dunham I."/>
            <person name="Carter N.P."/>
            <person name="McVean G."/>
            <person name="Ross M.T."/>
            <person name="Harrow J."/>
            <person name="Olson M.V."/>
            <person name="Beck S."/>
            <person name="Rogers J."/>
            <person name="Bentley D.R."/>
        </authorList>
    </citation>
    <scope>NUCLEOTIDE SEQUENCE [LARGE SCALE GENOMIC DNA]</scope>
</reference>
<reference key="4">
    <citation type="journal article" date="2009" name="Nat. Methods">
        <title>Enrichment of glycopeptides for glycan structure and attachment site identification.</title>
        <authorList>
            <person name="Nilsson J."/>
            <person name="Rueetschi U."/>
            <person name="Halim A."/>
            <person name="Hesse C."/>
            <person name="Carlsohn E."/>
            <person name="Brinkmalm G."/>
            <person name="Larson G."/>
        </authorList>
    </citation>
    <scope>GLYCOSYLATION [LARGE SCALE ANALYSIS] AT THR-36 AND THR-37</scope>
    <scope>STRUCTURE OF CARBOHYDRATES</scope>
    <source>
        <tissue>Cerebrospinal fluid</tissue>
    </source>
</reference>
<reference key="5">
    <citation type="journal article" date="2020" name="Genet. Med.">
        <title>Loss of TNR causes a nonprogressive neurodevelopmental disorder with spasticity and transient opisthotonus.</title>
        <authorList>
            <person name="Wagner M."/>
            <person name="Levy J."/>
            <person name="Jung-Klawitter S."/>
            <person name="Bakhtiari S."/>
            <person name="Monteiro F."/>
            <person name="Maroofian R."/>
            <person name="Bierhals T."/>
            <person name="Hempel M."/>
            <person name="Elmaleh-Berges M."/>
            <person name="Kitajima J.P."/>
            <person name="Kim C.A."/>
            <person name="Salomao J.G."/>
            <person name="Amor D.J."/>
            <person name="Cooper M.S."/>
            <person name="Perrin L."/>
            <person name="Pipiras E."/>
            <person name="Neu A."/>
            <person name="Doosti M."/>
            <person name="Karimiani E.G."/>
            <person name="Toosi M.B."/>
            <person name="Houlden H."/>
            <person name="Jin S.C."/>
            <person name="Si Y.C."/>
            <person name="Rodan L.H."/>
            <person name="Venselaar H."/>
            <person name="Kruer M.C."/>
            <person name="Kok F."/>
            <person name="Hoffmann G.F."/>
            <person name="Strom T.M."/>
            <person name="Wortmann S.B."/>
            <person name="Tabet A.C."/>
            <person name="Opladen T."/>
        </authorList>
    </citation>
    <scope>VARIANTS NEDSTO 69-TYR--PHE-1358 DEL; THR-397; ASN-532; 905-ARG--PHE-1358 DEL; ARG-1119 AND TRP-1192</scope>
    <scope>INVOLVEMENT IN NEDSTO</scope>
</reference>
<sequence length="1358" mass="149562">MGADGETVVLKNMLIGINLILLGSMIKPSECQLEVTTERVQRQSVEEEGGIANYNTSSKEQPVVFNHVYNINVPLDNLCSSGLEASAEQEVSAEDETLAEYMGQTSDHESQVTFTHRINFPKKACPCASSAQVLQELLSRIEMLEREVSVLRDQCNANCCQESAATGQLDYIPHCSGHGNFSFESCGCICNEGWFGKNCSEPYCPLGCSSRGVCVDGQCICDSEYSGDDCSELRCPTDCSSRGLCVDGECVCEEPYTGEDCRELRCPGDCSGKGRCANGTCLCEEGYVGEDCGQRQCLNACSGRGQCEEGLCVCEEGYQGPDCSAVAPPEDLRVAGISDRSIELEWDGPMAVTEYVISYQPTALGGLQLQQRVPGDWSGVTITELEPGLTYNISVYAVISNILSLPITAKVATHLSTPQGLQFKTITETTVEVQWEPFSFSFDGWEISFIPKNNEGGVIAQVPSDVTSFNQTGLKPGEEYIVNVVALKEQARSPPTSASVSTVIDGPTQILVRDVSDTVAFVEWIPPRAKVDFILLKYGLVGGEGGRTTFRLQPPLSQYSVQALRPGSRYEVSVSAVRGTNESDSATTQFTTEIDAPKNLRVGSRTATSLDLEWDNSEAEVQEYKVVYSTLAGEQYHEVLVPRGIGPTTRATLTDLVPGTEYGVGISAVMNSQQSVPATMNARTELDSPRDLMVTASSETSISLIWTKASGPIDHYRITFTPSSGIASEVTVPKDRTSYTLTDLEPGAEYIISVTAERGRQQSLESTVDAFTGFRPISHLHFSHVTSSSVNITWSDPSPPADRLILNYSPRDEEEEMMEVSLDATKRHAVLMGLQPATEYIVNLVAVHGTVTSEPIVGSITTGIDPPKDITISNVTKDSVMVSWSPPVASFDYYRVSYRPTQVGRLDSSVVPNTVTEFTITRLNPATEYEISLNSVRGREESERICTLVHTAMDNPVDLIATNITPTEALLQWKAPVGEVENYVIVLTHFAVAGETILVDGVSEEFRLVDLLPSTHYTATMYATNGPLTSGTISTNFSTLLDPPANLTASEVTRQSALISWQPPRAEIENYVLTYKSTDGSRKELIVDAEDTWIRLEGLLENTDYTVLLQAAQDTTWSSITSTAFTTGGRVFPHPQDCAQHLMNGDTLSGVYPIFLNGELSQKLQVYCDMTTDGGGWIVFQRRQNGQTDFFRKWADYRVGFGNVEDEFWLGLDNIHRITSQGRYELRVDMRDGQEAAFASYDRFSVEDSRNLYKLRIGSYNGTAGDSLSYHQGRPFSTEDRDNDVAVTNCAMSYKGAWWYKNCHRTNLNGKYGESRHSQGINWYHWKGHEFSIPFVEMKMRPYNHRLMAGRKRQSLQF</sequence>
<proteinExistence type="evidence at protein level"/>
<organism>
    <name type="scientific">Homo sapiens</name>
    <name type="common">Human</name>
    <dbReference type="NCBI Taxonomy" id="9606"/>
    <lineage>
        <taxon>Eukaryota</taxon>
        <taxon>Metazoa</taxon>
        <taxon>Chordata</taxon>
        <taxon>Craniata</taxon>
        <taxon>Vertebrata</taxon>
        <taxon>Euteleostomi</taxon>
        <taxon>Mammalia</taxon>
        <taxon>Eutheria</taxon>
        <taxon>Euarchontoglires</taxon>
        <taxon>Primates</taxon>
        <taxon>Haplorrhini</taxon>
        <taxon>Catarrhini</taxon>
        <taxon>Hominidae</taxon>
        <taxon>Homo</taxon>
    </lineage>
</organism>
<gene>
    <name type="primary">TNR</name>
</gene>
<evidence type="ECO:0000250" key="1"/>
<evidence type="ECO:0000250" key="2">
    <source>
        <dbReference type="UniProtKB" id="Q05546"/>
    </source>
</evidence>
<evidence type="ECO:0000255" key="3"/>
<evidence type="ECO:0000255" key="4">
    <source>
        <dbReference type="PROSITE-ProRule" id="PRU00316"/>
    </source>
</evidence>
<evidence type="ECO:0000255" key="5">
    <source>
        <dbReference type="PROSITE-ProRule" id="PRU00739"/>
    </source>
</evidence>
<evidence type="ECO:0000269" key="6">
    <source>
    </source>
</evidence>
<evidence type="ECO:0000269" key="7">
    <source>
    </source>
</evidence>
<evidence type="ECO:0000269" key="8">
    <source>
    </source>
</evidence>
<evidence type="ECO:0000269" key="9">
    <source ref="2"/>
</evidence>
<evidence type="ECO:0000303" key="10">
    <source>
    </source>
</evidence>
<evidence type="ECO:0000305" key="11"/>
<evidence type="ECO:0000305" key="12">
    <source>
    </source>
</evidence>
<evidence type="ECO:0007829" key="13">
    <source>
        <dbReference type="PDB" id="8FN9"/>
    </source>
</evidence>
<evidence type="ECO:0007829" key="14">
    <source>
        <dbReference type="PDB" id="8FNA"/>
    </source>
</evidence>
<feature type="signal peptide" evidence="3">
    <location>
        <begin position="1"/>
        <end position="31"/>
    </location>
</feature>
<feature type="chain" id="PRO_0000007747" description="Tenascin-R">
    <location>
        <begin position="32"/>
        <end position="1358"/>
    </location>
</feature>
<feature type="domain" description="EGF-like 1">
    <location>
        <begin position="188"/>
        <end position="199"/>
    </location>
</feature>
<feature type="domain" description="EGF-like 2">
    <location>
        <begin position="219"/>
        <end position="230"/>
    </location>
</feature>
<feature type="domain" description="EGF-like 3">
    <location>
        <begin position="250"/>
        <end position="261"/>
    </location>
</feature>
<feature type="domain" description="EGF-like 4">
    <location>
        <begin position="281"/>
        <end position="292"/>
    </location>
</feature>
<feature type="domain" description="EGF-like 5">
    <location>
        <begin position="312"/>
        <end position="323"/>
    </location>
</feature>
<feature type="domain" description="Fibronectin type-III 1" evidence="4">
    <location>
        <begin position="328"/>
        <end position="420"/>
    </location>
</feature>
<feature type="domain" description="Fibronectin type-III 2" evidence="4">
    <location>
        <begin position="421"/>
        <end position="505"/>
    </location>
</feature>
<feature type="domain" description="Fibronectin type-III 3" evidence="4">
    <location>
        <begin position="506"/>
        <end position="595"/>
    </location>
</feature>
<feature type="domain" description="Fibronectin type-III 4" evidence="4">
    <location>
        <begin position="596"/>
        <end position="687"/>
    </location>
</feature>
<feature type="domain" description="Fibronectin type-III 5" evidence="4">
    <location>
        <begin position="688"/>
        <end position="777"/>
    </location>
</feature>
<feature type="domain" description="Fibronectin type-III 6" evidence="4">
    <location>
        <begin position="778"/>
        <end position="865"/>
    </location>
</feature>
<feature type="domain" description="Fibronectin type-III 7" evidence="4">
    <location>
        <begin position="866"/>
        <end position="955"/>
    </location>
</feature>
<feature type="domain" description="Fibronectin type-III 8" evidence="4">
    <location>
        <begin position="956"/>
        <end position="1042"/>
    </location>
</feature>
<feature type="domain" description="Fibronectin type-III 9" evidence="4">
    <location>
        <begin position="1043"/>
        <end position="1130"/>
    </location>
</feature>
<feature type="domain" description="Fibrinogen C-terminal" evidence="5">
    <location>
        <begin position="1129"/>
        <end position="1344"/>
    </location>
</feature>
<feature type="coiled-coil region" evidence="3">
    <location>
        <begin position="127"/>
        <end position="157"/>
    </location>
</feature>
<feature type="modified residue" description="Phosphoserine" evidence="2">
    <location>
        <position position="724"/>
    </location>
</feature>
<feature type="glycosylation site" description="O-linked (GalNAc...) threonine" evidence="12">
    <location>
        <position position="36"/>
    </location>
</feature>
<feature type="glycosylation site" description="O-linked (GalNAc...) threonine" evidence="12">
    <location>
        <position position="37"/>
    </location>
</feature>
<feature type="glycosylation site" description="N-linked (GlcNAc...) asparagine" evidence="3">
    <location>
        <position position="55"/>
    </location>
</feature>
<feature type="glycosylation site" description="O-linked (Xyl...) (chondroitin sulfate) serine" evidence="3">
    <location>
        <position position="176"/>
    </location>
</feature>
<feature type="glycosylation site" description="N-linked (GlcNAc...) asparagine" evidence="3">
    <location>
        <position position="180"/>
    </location>
</feature>
<feature type="glycosylation site" description="N-linked (GlcNAc...) asparagine" evidence="3">
    <location>
        <position position="198"/>
    </location>
</feature>
<feature type="glycosylation site" description="O-linked (Xyl...) (chondroitin sulfate) serine" evidence="3">
    <location>
        <position position="271"/>
    </location>
</feature>
<feature type="glycosylation site" description="N-linked (GlcNAc...) asparagine" evidence="3">
    <location>
        <position position="278"/>
    </location>
</feature>
<feature type="glycosylation site" description="O-linked (Xyl...) (chondroitin sulfate) serine" evidence="3">
    <location>
        <position position="302"/>
    </location>
</feature>
<feature type="glycosylation site" description="N-linked (GlcNAc...) asparagine" evidence="3">
    <location>
        <position position="392"/>
    </location>
</feature>
<feature type="glycosylation site" description="N-linked (GlcNAc...) asparagine" evidence="3">
    <location>
        <position position="470"/>
    </location>
</feature>
<feature type="glycosylation site" description="N-linked (GlcNAc...) asparagine" evidence="3">
    <location>
        <position position="581"/>
    </location>
</feature>
<feature type="glycosylation site" description="N-linked (GlcNAc...) asparagine" evidence="3">
    <location>
        <position position="791"/>
    </location>
</feature>
<feature type="glycosylation site" description="N-linked (GlcNAc...) asparagine" evidence="3">
    <location>
        <position position="874"/>
    </location>
</feature>
<feature type="glycosylation site" description="N-linked (GlcNAc...) asparagine" evidence="3">
    <location>
        <position position="1036"/>
    </location>
</feature>
<feature type="glycosylation site" description="N-linked (GlcNAc...) asparagine" evidence="3">
    <location>
        <position position="1046"/>
    </location>
</feature>
<feature type="glycosylation site" description="N-linked (GlcNAc...) asparagine" evidence="3">
    <location>
        <position position="1261"/>
    </location>
</feature>
<feature type="disulfide bond" evidence="5">
    <location>
        <begin position="292"/>
        <end position="301"/>
    </location>
</feature>
<feature type="disulfide bond" evidence="5">
    <location>
        <begin position="297"/>
        <end position="312"/>
    </location>
</feature>
<feature type="disulfide bond" evidence="5">
    <location>
        <begin position="314"/>
        <end position="323"/>
    </location>
</feature>
<feature type="splice variant" id="VSP_012993" description="In isoform 2." evidence="10">
    <location>
        <begin position="773"/>
        <end position="862"/>
    </location>
</feature>
<feature type="sequence variant" id="VAR_021479" description="In dbSNP:rs859398." evidence="8 9">
    <original>I</original>
    <variation>V</variation>
    <location>
        <position position="17"/>
    </location>
</feature>
<feature type="sequence variant" id="VAR_086584" description="In NEDSTO." evidence="7">
    <location>
        <begin position="69"/>
        <end position="1358"/>
    </location>
</feature>
<feature type="sequence variant" id="VAR_021906" description="In dbSNP:rs2239819.">
    <original>A</original>
    <variation>S</variation>
    <location>
        <position position="128"/>
    </location>
</feature>
<feature type="sequence variant" id="VAR_021907" description="In dbSNP:rs3752516.">
    <original>G</original>
    <variation>S</variation>
    <location>
        <position position="293"/>
    </location>
</feature>
<feature type="sequence variant" id="VAR_055780" description="In dbSNP:rs35736986.">
    <original>S</original>
    <variation>N</variation>
    <location>
        <position position="302"/>
    </location>
</feature>
<feature type="sequence variant" id="VAR_086585" description="In NEDSTO; uncertain significance; dbSNP:rs750577544." evidence="7">
    <original>A</original>
    <variation>T</variation>
    <location>
        <position position="397"/>
    </location>
</feature>
<feature type="sequence variant" id="VAR_086586" description="In NEDSTO; uncertain significance; dbSNP:rs892080402." evidence="7">
    <original>D</original>
    <variation>N</variation>
    <location>
        <position position="532"/>
    </location>
</feature>
<feature type="sequence variant" id="VAR_030737" description="In dbSNP:rs859427.">
    <original>R</original>
    <variation>K</variation>
    <location>
        <position position="643"/>
    </location>
</feature>
<feature type="sequence variant" id="VAR_086587" description="In NEDSTO." evidence="7">
    <location>
        <begin position="905"/>
        <end position="1358"/>
    </location>
</feature>
<feature type="sequence variant" id="VAR_086588" description="In NEDSTO; uncertain significance; dbSNP:rs1571329071." evidence="7">
    <original>S</original>
    <variation>R</variation>
    <location>
        <position position="1119"/>
    </location>
</feature>
<feature type="sequence variant" id="VAR_086589" description="In NEDSTO; dbSNP:rs1571308125." evidence="7">
    <original>R</original>
    <variation>W</variation>
    <location>
        <position position="1192"/>
    </location>
</feature>
<feature type="sequence conflict" description="In Ref. 2; CAA66709." evidence="11" ref="2">
    <original>S</original>
    <variation>I</variation>
    <location>
        <position position="629"/>
    </location>
</feature>
<feature type="helix" evidence="14">
    <location>
        <begin position="1138"/>
        <end position="1143"/>
    </location>
</feature>
<feature type="strand" evidence="14">
    <location>
        <begin position="1150"/>
        <end position="1155"/>
    </location>
</feature>
<feature type="helix" evidence="14">
    <location>
        <begin position="1156"/>
        <end position="1158"/>
    </location>
</feature>
<feature type="helix" evidence="13">
    <location>
        <begin position="1160"/>
        <end position="1162"/>
    </location>
</feature>
<feature type="strand" evidence="14">
    <location>
        <begin position="1163"/>
        <end position="1169"/>
    </location>
</feature>
<feature type="helix" evidence="14">
    <location>
        <begin position="1172"/>
        <end position="1174"/>
    </location>
</feature>
<feature type="strand" evidence="14">
    <location>
        <begin position="1177"/>
        <end position="1186"/>
    </location>
</feature>
<feature type="helix" evidence="14">
    <location>
        <begin position="1194"/>
        <end position="1199"/>
    </location>
</feature>
<feature type="strand" evidence="14">
    <location>
        <begin position="1206"/>
        <end position="1209"/>
    </location>
</feature>
<feature type="helix" evidence="14">
    <location>
        <begin position="1212"/>
        <end position="1219"/>
    </location>
</feature>
<feature type="strand" evidence="14">
    <location>
        <begin position="1224"/>
        <end position="1232"/>
    </location>
</feature>
<feature type="strand" evidence="14">
    <location>
        <begin position="1235"/>
        <end position="1246"/>
    </location>
</feature>
<feature type="turn" evidence="14">
    <location>
        <begin position="1249"/>
        <end position="1253"/>
    </location>
</feature>
<feature type="strand" evidence="14">
    <location>
        <begin position="1255"/>
        <end position="1257"/>
    </location>
</feature>
<feature type="strand" evidence="14">
    <location>
        <begin position="1260"/>
        <end position="1264"/>
    </location>
</feature>
<feature type="helix" evidence="14">
    <location>
        <begin position="1269"/>
        <end position="1271"/>
    </location>
</feature>
<feature type="strand" evidence="14">
    <location>
        <begin position="1284"/>
        <end position="1288"/>
    </location>
</feature>
<feature type="helix" evidence="14">
    <location>
        <begin position="1290"/>
        <end position="1293"/>
    </location>
</feature>
<feature type="strand" evidence="14">
    <location>
        <begin position="1301"/>
        <end position="1303"/>
    </location>
</feature>
<feature type="turn" evidence="14">
    <location>
        <begin position="1317"/>
        <end position="1319"/>
    </location>
</feature>
<feature type="helix" evidence="14">
    <location>
        <begin position="1324"/>
        <end position="1327"/>
    </location>
</feature>
<feature type="strand" evidence="14">
    <location>
        <begin position="1334"/>
        <end position="1342"/>
    </location>
</feature>
<feature type="helix" evidence="13">
    <location>
        <begin position="1343"/>
        <end position="1347"/>
    </location>
</feature>
<dbReference type="EMBL" id="Z67996">
    <property type="protein sequence ID" value="CAA91947.1"/>
    <property type="molecule type" value="mRNA"/>
</dbReference>
<dbReference type="EMBL" id="X98085">
    <property type="protein sequence ID" value="CAA66709.1"/>
    <property type="molecule type" value="mRNA"/>
</dbReference>
<dbReference type="EMBL" id="AL021919">
    <property type="status" value="NOT_ANNOTATED_CDS"/>
    <property type="molecule type" value="Genomic_DNA"/>
</dbReference>
<dbReference type="EMBL" id="AL023285">
    <property type="status" value="NOT_ANNOTATED_CDS"/>
    <property type="molecule type" value="Genomic_DNA"/>
</dbReference>
<dbReference type="EMBL" id="AL136530">
    <property type="status" value="NOT_ANNOTATED_CDS"/>
    <property type="molecule type" value="Genomic_DNA"/>
</dbReference>
<dbReference type="EMBL" id="Z94055">
    <property type="status" value="NOT_ANNOTATED_CDS"/>
    <property type="molecule type" value="Genomic_DNA"/>
</dbReference>
<dbReference type="EMBL" id="Z94057">
    <property type="status" value="NOT_ANNOTATED_CDS"/>
    <property type="molecule type" value="Genomic_DNA"/>
</dbReference>
<dbReference type="CCDS" id="CCDS1318.1">
    <molecule id="Q92752-1"/>
</dbReference>
<dbReference type="RefSeq" id="NP_003276.3">
    <molecule id="Q92752-1"/>
    <property type="nucleotide sequence ID" value="NM_003285.2"/>
</dbReference>
<dbReference type="RefSeq" id="XP_016857707.1">
    <property type="nucleotide sequence ID" value="XM_017002218.1"/>
</dbReference>
<dbReference type="RefSeq" id="XP_016857708.1">
    <property type="nucleotide sequence ID" value="XM_017002219.1"/>
</dbReference>
<dbReference type="PDB" id="8FN9">
    <property type="method" value="X-ray"/>
    <property type="resolution" value="1.80 A"/>
    <property type="chains" value="A/C/E/G=1129-1358"/>
</dbReference>
<dbReference type="PDB" id="8FNA">
    <property type="method" value="X-ray"/>
    <property type="resolution" value="1.75 A"/>
    <property type="chains" value="A=1129-1358"/>
</dbReference>
<dbReference type="PDBsum" id="8FN9"/>
<dbReference type="PDBsum" id="8FNA"/>
<dbReference type="SMR" id="Q92752"/>
<dbReference type="BioGRID" id="112997">
    <property type="interactions" value="13"/>
</dbReference>
<dbReference type="ComplexPortal" id="CPX-1019">
    <property type="entry name" value="Tenascin-R complex"/>
</dbReference>
<dbReference type="FunCoup" id="Q92752">
    <property type="interactions" value="544"/>
</dbReference>
<dbReference type="IntAct" id="Q92752">
    <property type="interactions" value="4"/>
</dbReference>
<dbReference type="STRING" id="9606.ENSP00000356646"/>
<dbReference type="UniLectin" id="Q92752"/>
<dbReference type="GlyCosmos" id="Q92752">
    <property type="glycosylation" value="14 sites, No reported glycans"/>
</dbReference>
<dbReference type="GlyGen" id="Q92752">
    <property type="glycosylation" value="20 sites, 1 N-linked glycan (1 site), 1 O-linked glycan (2 sites)"/>
</dbReference>
<dbReference type="iPTMnet" id="Q92752"/>
<dbReference type="PhosphoSitePlus" id="Q92752"/>
<dbReference type="SwissPalm" id="Q92752"/>
<dbReference type="BioMuta" id="TNR"/>
<dbReference type="DMDM" id="311033534"/>
<dbReference type="MassIVE" id="Q92752"/>
<dbReference type="PaxDb" id="9606-ENSP00000356646"/>
<dbReference type="PeptideAtlas" id="Q92752"/>
<dbReference type="ProteomicsDB" id="75442">
    <molecule id="Q92752-1"/>
</dbReference>
<dbReference type="ProteomicsDB" id="75443">
    <molecule id="Q92752-2"/>
</dbReference>
<dbReference type="Antibodypedia" id="20571">
    <property type="antibodies" value="134 antibodies from 25 providers"/>
</dbReference>
<dbReference type="DNASU" id="7143"/>
<dbReference type="Ensembl" id="ENST00000367674.7">
    <molecule id="Q92752-1"/>
    <property type="protein sequence ID" value="ENSP00000356646.1"/>
    <property type="gene ID" value="ENSG00000116147.19"/>
</dbReference>
<dbReference type="GeneID" id="7143"/>
<dbReference type="KEGG" id="hsa:7143"/>
<dbReference type="MANE-Select" id="ENST00000367674.7">
    <property type="protein sequence ID" value="ENSP00000356646.1"/>
    <property type="RefSeq nucleotide sequence ID" value="NM_003285.3"/>
    <property type="RefSeq protein sequence ID" value="NP_003276.3"/>
</dbReference>
<dbReference type="UCSC" id="uc009wwu.2">
    <molecule id="Q92752-1"/>
    <property type="organism name" value="human"/>
</dbReference>
<dbReference type="AGR" id="HGNC:11953"/>
<dbReference type="CTD" id="7143"/>
<dbReference type="DisGeNET" id="7143"/>
<dbReference type="GeneCards" id="TNR"/>
<dbReference type="HGNC" id="HGNC:11953">
    <property type="gene designation" value="TNR"/>
</dbReference>
<dbReference type="HPA" id="ENSG00000116147">
    <property type="expression patterns" value="Group enriched (brain, retina)"/>
</dbReference>
<dbReference type="MalaCards" id="TNR"/>
<dbReference type="MIM" id="601995">
    <property type="type" value="gene"/>
</dbReference>
<dbReference type="MIM" id="619653">
    <property type="type" value="phenotype"/>
</dbReference>
<dbReference type="neXtProt" id="NX_Q92752"/>
<dbReference type="OpenTargets" id="ENSG00000116147"/>
<dbReference type="PharmGKB" id="PA36642"/>
<dbReference type="VEuPathDB" id="HostDB:ENSG00000116147"/>
<dbReference type="eggNOG" id="KOG1225">
    <property type="taxonomic scope" value="Eukaryota"/>
</dbReference>
<dbReference type="eggNOG" id="KOG2579">
    <property type="taxonomic scope" value="Eukaryota"/>
</dbReference>
<dbReference type="GeneTree" id="ENSGT00940000157761"/>
<dbReference type="HOGENOM" id="CLU_001162_0_0_1"/>
<dbReference type="InParanoid" id="Q92752"/>
<dbReference type="OMA" id="YMDHTSD"/>
<dbReference type="OrthoDB" id="6130531at2759"/>
<dbReference type="PAN-GO" id="Q92752">
    <property type="GO annotations" value="4 GO annotations based on evolutionary models"/>
</dbReference>
<dbReference type="PhylomeDB" id="Q92752"/>
<dbReference type="TreeFam" id="TF329915"/>
<dbReference type="PathwayCommons" id="Q92752"/>
<dbReference type="Reactome" id="R-HSA-3000178">
    <property type="pathway name" value="ECM proteoglycans"/>
</dbReference>
<dbReference type="SignaLink" id="Q92752"/>
<dbReference type="BioGRID-ORCS" id="7143">
    <property type="hits" value="16 hits in 1148 CRISPR screens"/>
</dbReference>
<dbReference type="CD-CODE" id="FB4E32DD">
    <property type="entry name" value="Presynaptic clusters and postsynaptic densities"/>
</dbReference>
<dbReference type="ChiTaRS" id="TNR">
    <property type="organism name" value="human"/>
</dbReference>
<dbReference type="GeneWiki" id="Tenascin-R"/>
<dbReference type="GenomeRNAi" id="7143"/>
<dbReference type="Pharos" id="Q92752">
    <property type="development level" value="Tbio"/>
</dbReference>
<dbReference type="PRO" id="PR:Q92752"/>
<dbReference type="Proteomes" id="UP000005640">
    <property type="component" value="Chromosome 1"/>
</dbReference>
<dbReference type="RNAct" id="Q92752">
    <property type="molecule type" value="protein"/>
</dbReference>
<dbReference type="Bgee" id="ENSG00000116147">
    <property type="expression patterns" value="Expressed in CA1 field of hippocampus and 82 other cell types or tissues"/>
</dbReference>
<dbReference type="ExpressionAtlas" id="Q92752">
    <property type="expression patterns" value="baseline and differential"/>
</dbReference>
<dbReference type="GO" id="GO:0009986">
    <property type="term" value="C:cell surface"/>
    <property type="evidence" value="ECO:0007669"/>
    <property type="project" value="Ensembl"/>
</dbReference>
<dbReference type="GO" id="GO:0062023">
    <property type="term" value="C:collagen-containing extracellular matrix"/>
    <property type="evidence" value="ECO:0000318"/>
    <property type="project" value="GO_Central"/>
</dbReference>
<dbReference type="GO" id="GO:0005576">
    <property type="term" value="C:extracellular region"/>
    <property type="evidence" value="ECO:0000304"/>
    <property type="project" value="Reactome"/>
</dbReference>
<dbReference type="GO" id="GO:0005615">
    <property type="term" value="C:extracellular space"/>
    <property type="evidence" value="ECO:0000318"/>
    <property type="project" value="GO_Central"/>
</dbReference>
<dbReference type="GO" id="GO:0098978">
    <property type="term" value="C:glutamatergic synapse"/>
    <property type="evidence" value="ECO:0007669"/>
    <property type="project" value="Ensembl"/>
</dbReference>
<dbReference type="GO" id="GO:0045121">
    <property type="term" value="C:membrane raft"/>
    <property type="evidence" value="ECO:0007669"/>
    <property type="project" value="Ensembl"/>
</dbReference>
<dbReference type="GO" id="GO:0072534">
    <property type="term" value="C:perineuronal net"/>
    <property type="evidence" value="ECO:0000266"/>
    <property type="project" value="ComplexPortal"/>
</dbReference>
<dbReference type="GO" id="GO:0098685">
    <property type="term" value="C:Schaffer collateral - CA1 synapse"/>
    <property type="evidence" value="ECO:0007669"/>
    <property type="project" value="Ensembl"/>
</dbReference>
<dbReference type="GO" id="GO:0090733">
    <property type="term" value="C:tenascin complex"/>
    <property type="evidence" value="ECO:0000266"/>
    <property type="project" value="ComplexPortal"/>
</dbReference>
<dbReference type="GO" id="GO:0008306">
    <property type="term" value="P:associative learning"/>
    <property type="evidence" value="ECO:0007669"/>
    <property type="project" value="Ensembl"/>
</dbReference>
<dbReference type="GO" id="GO:0048677">
    <property type="term" value="P:axon extension involved in regeneration"/>
    <property type="evidence" value="ECO:0007669"/>
    <property type="project" value="Ensembl"/>
</dbReference>
<dbReference type="GO" id="GO:0007411">
    <property type="term" value="P:axon guidance"/>
    <property type="evidence" value="ECO:0000303"/>
    <property type="project" value="ProtInc"/>
</dbReference>
<dbReference type="GO" id="GO:0007155">
    <property type="term" value="P:cell adhesion"/>
    <property type="evidence" value="ECO:0000303"/>
    <property type="project" value="ProtInc"/>
</dbReference>
<dbReference type="GO" id="GO:0030198">
    <property type="term" value="P:extracellular matrix organization"/>
    <property type="evidence" value="ECO:0007669"/>
    <property type="project" value="Ensembl"/>
</dbReference>
<dbReference type="GO" id="GO:0035641">
    <property type="term" value="P:locomotory exploration behavior"/>
    <property type="evidence" value="ECO:0007669"/>
    <property type="project" value="Ensembl"/>
</dbReference>
<dbReference type="GO" id="GO:0060291">
    <property type="term" value="P:long-term synaptic potentiation"/>
    <property type="evidence" value="ECO:0007669"/>
    <property type="project" value="Ensembl"/>
</dbReference>
<dbReference type="GO" id="GO:0048692">
    <property type="term" value="P:negative regulation of axon extension involved in regeneration"/>
    <property type="evidence" value="ECO:0007669"/>
    <property type="project" value="Ensembl"/>
</dbReference>
<dbReference type="GO" id="GO:0022408">
    <property type="term" value="P:negative regulation of cell-cell adhesion"/>
    <property type="evidence" value="ECO:0007669"/>
    <property type="project" value="Ensembl"/>
</dbReference>
<dbReference type="GO" id="GO:0010977">
    <property type="term" value="P:negative regulation of neuron projection development"/>
    <property type="evidence" value="ECO:0000266"/>
    <property type="project" value="ComplexPortal"/>
</dbReference>
<dbReference type="GO" id="GO:0050805">
    <property type="term" value="P:negative regulation of synaptic transmission"/>
    <property type="evidence" value="ECO:0007669"/>
    <property type="project" value="Ensembl"/>
</dbReference>
<dbReference type="GO" id="GO:0007399">
    <property type="term" value="P:nervous system development"/>
    <property type="evidence" value="ECO:0000318"/>
    <property type="project" value="GO_Central"/>
</dbReference>
<dbReference type="GO" id="GO:0097402">
    <property type="term" value="P:neuroblast migration"/>
    <property type="evidence" value="ECO:0007669"/>
    <property type="project" value="Ensembl"/>
</dbReference>
<dbReference type="GO" id="GO:0050885">
    <property type="term" value="P:neuromuscular process controlling balance"/>
    <property type="evidence" value="ECO:0007669"/>
    <property type="project" value="Ensembl"/>
</dbReference>
<dbReference type="GO" id="GO:0007158">
    <property type="term" value="P:neuron cell-cell adhesion"/>
    <property type="evidence" value="ECO:0007669"/>
    <property type="project" value="Ensembl"/>
</dbReference>
<dbReference type="GO" id="GO:0051968">
    <property type="term" value="P:positive regulation of synaptic transmission, glutamatergic"/>
    <property type="evidence" value="ECO:0007669"/>
    <property type="project" value="Ensembl"/>
</dbReference>
<dbReference type="GO" id="GO:0051971">
    <property type="term" value="P:positive regulation of transmission of nerve impulse"/>
    <property type="evidence" value="ECO:0007669"/>
    <property type="project" value="Ensembl"/>
</dbReference>
<dbReference type="GO" id="GO:0030155">
    <property type="term" value="P:regulation of cell adhesion"/>
    <property type="evidence" value="ECO:0000266"/>
    <property type="project" value="ComplexPortal"/>
</dbReference>
<dbReference type="GO" id="GO:0045595">
    <property type="term" value="P:regulation of cell differentiation"/>
    <property type="evidence" value="ECO:0000266"/>
    <property type="project" value="ComplexPortal"/>
</dbReference>
<dbReference type="GO" id="GO:0030334">
    <property type="term" value="P:regulation of cell migration"/>
    <property type="evidence" value="ECO:0000266"/>
    <property type="project" value="ComplexPortal"/>
</dbReference>
<dbReference type="GO" id="GO:0050808">
    <property type="term" value="P:synapse organization"/>
    <property type="evidence" value="ECO:0007669"/>
    <property type="project" value="Ensembl"/>
</dbReference>
<dbReference type="GO" id="GO:0035249">
    <property type="term" value="P:synaptic transmission, glutamatergic"/>
    <property type="evidence" value="ECO:0007669"/>
    <property type="project" value="Ensembl"/>
</dbReference>
<dbReference type="GO" id="GO:0022029">
    <property type="term" value="P:telencephalon cell migration"/>
    <property type="evidence" value="ECO:0007669"/>
    <property type="project" value="Ensembl"/>
</dbReference>
<dbReference type="CDD" id="cd00063">
    <property type="entry name" value="FN3"/>
    <property type="match status" value="9"/>
</dbReference>
<dbReference type="CDD" id="cd00087">
    <property type="entry name" value="FReD"/>
    <property type="match status" value="1"/>
</dbReference>
<dbReference type="FunFam" id="2.60.40.10:FF:000099">
    <property type="entry name" value="Fibronectin 1"/>
    <property type="match status" value="2"/>
</dbReference>
<dbReference type="FunFam" id="2.10.25.10:FF:000001">
    <property type="entry name" value="Tenascin C"/>
    <property type="match status" value="4"/>
</dbReference>
<dbReference type="FunFam" id="2.60.40.10:FF:000201">
    <property type="entry name" value="Tenascin C"/>
    <property type="match status" value="1"/>
</dbReference>
<dbReference type="FunFam" id="2.60.40.10:FF:000207">
    <property type="entry name" value="Tenascin C"/>
    <property type="match status" value="1"/>
</dbReference>
<dbReference type="FunFam" id="3.90.215.10:FF:000001">
    <property type="entry name" value="Tenascin isoform 1"/>
    <property type="match status" value="1"/>
</dbReference>
<dbReference type="FunFam" id="2.60.40.10:FF:000609">
    <property type="entry name" value="Tenascin R"/>
    <property type="match status" value="1"/>
</dbReference>
<dbReference type="FunFam" id="2.60.40.10:FF:000682">
    <property type="entry name" value="Tenascin R"/>
    <property type="match status" value="1"/>
</dbReference>
<dbReference type="FunFam" id="2.60.40.10:FF:000691">
    <property type="entry name" value="Tenascin R"/>
    <property type="match status" value="1"/>
</dbReference>
<dbReference type="FunFam" id="2.60.40.10:FF:000722">
    <property type="entry name" value="Tenascin R"/>
    <property type="match status" value="1"/>
</dbReference>
<dbReference type="FunFam" id="2.60.40.10:FF:001249">
    <property type="entry name" value="Tenascin R"/>
    <property type="match status" value="1"/>
</dbReference>
<dbReference type="Gene3D" id="3.90.215.10">
    <property type="entry name" value="Gamma Fibrinogen, chain A, domain 1"/>
    <property type="match status" value="1"/>
</dbReference>
<dbReference type="Gene3D" id="2.60.40.10">
    <property type="entry name" value="Immunoglobulins"/>
    <property type="match status" value="9"/>
</dbReference>
<dbReference type="Gene3D" id="2.10.25.10">
    <property type="entry name" value="Laminin"/>
    <property type="match status" value="4"/>
</dbReference>
<dbReference type="InterPro" id="IPR050991">
    <property type="entry name" value="ECM_Regulatory_Proteins"/>
</dbReference>
<dbReference type="InterPro" id="IPR000742">
    <property type="entry name" value="EGF-like_dom"/>
</dbReference>
<dbReference type="InterPro" id="IPR036056">
    <property type="entry name" value="Fibrinogen-like_C"/>
</dbReference>
<dbReference type="InterPro" id="IPR014716">
    <property type="entry name" value="Fibrinogen_a/b/g_C_1"/>
</dbReference>
<dbReference type="InterPro" id="IPR002181">
    <property type="entry name" value="Fibrinogen_a/b/g_C_dom"/>
</dbReference>
<dbReference type="InterPro" id="IPR003961">
    <property type="entry name" value="FN3_dom"/>
</dbReference>
<dbReference type="InterPro" id="IPR036116">
    <property type="entry name" value="FN3_sf"/>
</dbReference>
<dbReference type="InterPro" id="IPR013783">
    <property type="entry name" value="Ig-like_fold"/>
</dbReference>
<dbReference type="NCBIfam" id="NF040941">
    <property type="entry name" value="GGGWT_bact"/>
    <property type="match status" value="1"/>
</dbReference>
<dbReference type="PANTHER" id="PTHR46708">
    <property type="entry name" value="TENASCIN"/>
    <property type="match status" value="1"/>
</dbReference>
<dbReference type="PANTHER" id="PTHR46708:SF13">
    <property type="entry name" value="TENASCIN-R"/>
    <property type="match status" value="1"/>
</dbReference>
<dbReference type="Pfam" id="PF25024">
    <property type="entry name" value="EGF_TEN"/>
    <property type="match status" value="1"/>
</dbReference>
<dbReference type="Pfam" id="PF23106">
    <property type="entry name" value="EGF_Teneurin"/>
    <property type="match status" value="1"/>
</dbReference>
<dbReference type="Pfam" id="PF00147">
    <property type="entry name" value="Fibrinogen_C"/>
    <property type="match status" value="1"/>
</dbReference>
<dbReference type="Pfam" id="PF00041">
    <property type="entry name" value="fn3"/>
    <property type="match status" value="9"/>
</dbReference>
<dbReference type="SMART" id="SM00181">
    <property type="entry name" value="EGF"/>
    <property type="match status" value="4"/>
</dbReference>
<dbReference type="SMART" id="SM00186">
    <property type="entry name" value="FBG"/>
    <property type="match status" value="1"/>
</dbReference>
<dbReference type="SMART" id="SM00060">
    <property type="entry name" value="FN3"/>
    <property type="match status" value="9"/>
</dbReference>
<dbReference type="SUPFAM" id="SSF56496">
    <property type="entry name" value="Fibrinogen C-terminal domain-like"/>
    <property type="match status" value="1"/>
</dbReference>
<dbReference type="SUPFAM" id="SSF49265">
    <property type="entry name" value="Fibronectin type III"/>
    <property type="match status" value="5"/>
</dbReference>
<dbReference type="PROSITE" id="PS00022">
    <property type="entry name" value="EGF_1"/>
    <property type="match status" value="5"/>
</dbReference>
<dbReference type="PROSITE" id="PS01186">
    <property type="entry name" value="EGF_2"/>
    <property type="match status" value="4"/>
</dbReference>
<dbReference type="PROSITE" id="PS51406">
    <property type="entry name" value="FIBRINOGEN_C_2"/>
    <property type="match status" value="1"/>
</dbReference>
<dbReference type="PROSITE" id="PS50853">
    <property type="entry name" value="FN3"/>
    <property type="match status" value="9"/>
</dbReference>
<accession>Q92752</accession>
<accession>C9J563</accession>
<accession>Q15568</accession>
<accession>Q5R3G0</accession>
<comment type="function">
    <text evidence="1">Neural extracellular matrix (ECM) protein involved in interactions with different cells and matrix components. These interactions can influence cellular behavior by either evoking a stable adhesion and differentiation, or repulsion and inhibition of neurite growth. Binding to cell surface gangliosides inhibits RGD-dependent integrin-mediated cell adhesion and results in an inhibition of PTK2/FAK1 (FAK) phosphorylation and cell detachment. Binding to membrane surface sulfatides results in a oligodendrocyte adhesion and differentiation. Interaction with CNTN1 induces a repulsion of neurons and an inhibition of neurite outgrowth. Interacts with SCN2B may play a crucial role in clustering and regulation of activity of sodium channels at nodes of Ranvier. TNR-linked chondroitin sulfate glycosaminoglycans are involved in the interaction with FN1 and mediate inhibition of cell adhesion and neurite outgrowth. The highly regulated addition of sulfated carbohydrate structure may modulate the adhesive properties of TNR over the course of development and during synapse maintenance (By similarity).</text>
</comment>
<comment type="subunit">
    <text evidence="1">Forms oligomers. Interacts with CNTN1, TNC, and FN1. Interacts with BCAN and ACAN in a calcium-dependent manner. Interacts with SCN2B, PTPRZ1, and CSPG3 (By similarity).</text>
</comment>
<comment type="subcellular location">
    <subcellularLocation>
        <location>Secreted</location>
        <location>Extracellular space</location>
        <location>Extracellular matrix</location>
    </subcellularLocation>
</comment>
<comment type="alternative products">
    <event type="alternative splicing"/>
    <isoform>
        <id>Q92752-1</id>
        <name>1</name>
        <sequence type="displayed"/>
    </isoform>
    <isoform>
        <id>Q92752-2</id>
        <name>2</name>
        <sequence type="described" ref="VSP_012993"/>
    </isoform>
</comment>
<comment type="tissue specificity">
    <text evidence="8">Brain specific.</text>
</comment>
<comment type="domain">
    <text evidence="1">The EGF-like domains mediate interaction with CNTN1. The fibronectin type-III domains 3-5 mediate interaction with BCAN. The fibronectin type-III domains 1-2 and 7-9 mediate interaction with SCN2B (By similarity).</text>
</comment>
<comment type="PTM">
    <text evidence="1 6">Contains N-linked oligosaccharides, O-linked sialylated structures and O-linked chondroitin sulfate glycosaminoglycans. Contains N-linked oligosaccharides with a sulfated carbohydrate structure (By similarity). O-glycosylated on Thr-36 or Thr-37 with a core 1 or possibly core 8 glycan.</text>
</comment>
<comment type="disease" evidence="7">
    <disease id="DI-06287">
        <name>Neurodevelopmental disorder, non-progressive, with spasticity and transient opisthotonus</name>
        <acronym>NEDSTO</acronym>
        <description>An autosomal recessive disorder characterized by delayed motor milestones, delayed walking, speech delay, axial hypotonia, and peripheral spasticity apparent from infancy or early childhood. Affected individuals often show transient opisthotonic posturing in infancy, and later show abnormal involuntary movements. Variably impaired intellectual development, and brain myelination defects are present in some patients.</description>
        <dbReference type="MIM" id="619653"/>
    </disease>
    <text>The disease is caused by variants affecting the gene represented in this entry.</text>
</comment>
<comment type="similarity">
    <text evidence="11">Belongs to the tenascin family.</text>
</comment>
<protein>
    <recommendedName>
        <fullName>Tenascin-R</fullName>
        <shortName>TN-R</shortName>
    </recommendedName>
    <alternativeName>
        <fullName>Janusin</fullName>
    </alternativeName>
    <alternativeName>
        <fullName>Restrictin</fullName>
    </alternativeName>
</protein>
<keyword id="KW-0002">3D-structure</keyword>
<keyword id="KW-0025">Alternative splicing</keyword>
<keyword id="KW-0130">Cell adhesion</keyword>
<keyword id="KW-0175">Coiled coil</keyword>
<keyword id="KW-0225">Disease variant</keyword>
<keyword id="KW-1015">Disulfide bond</keyword>
<keyword id="KW-0245">EGF-like domain</keyword>
<keyword id="KW-0272">Extracellular matrix</keyword>
<keyword id="KW-0325">Glycoprotein</keyword>
<keyword id="KW-0597">Phosphoprotein</keyword>
<keyword id="KW-0654">Proteoglycan</keyword>
<keyword id="KW-1267">Proteomics identification</keyword>
<keyword id="KW-1185">Reference proteome</keyword>
<keyword id="KW-0677">Repeat</keyword>
<keyword id="KW-0964">Secreted</keyword>
<keyword id="KW-0730">Sialic acid</keyword>
<keyword id="KW-0732">Signal</keyword>